<dbReference type="EMBL" id="AP009049">
    <property type="protein sequence ID" value="BAH05233.1"/>
    <property type="molecule type" value="Genomic_DNA"/>
</dbReference>
<dbReference type="RefSeq" id="WP_011988802.1">
    <property type="nucleotide sequence ID" value="NC_011837.1"/>
</dbReference>
<dbReference type="SMR" id="B9DYA8"/>
<dbReference type="KEGG" id="ckr:CKR_0182"/>
<dbReference type="HOGENOM" id="CLU_122625_1_3_9"/>
<dbReference type="Proteomes" id="UP000007969">
    <property type="component" value="Chromosome"/>
</dbReference>
<dbReference type="GO" id="GO:1990904">
    <property type="term" value="C:ribonucleoprotein complex"/>
    <property type="evidence" value="ECO:0007669"/>
    <property type="project" value="UniProtKB-KW"/>
</dbReference>
<dbReference type="GO" id="GO:0005840">
    <property type="term" value="C:ribosome"/>
    <property type="evidence" value="ECO:0007669"/>
    <property type="project" value="UniProtKB-KW"/>
</dbReference>
<dbReference type="GO" id="GO:0003735">
    <property type="term" value="F:structural constituent of ribosome"/>
    <property type="evidence" value="ECO:0007669"/>
    <property type="project" value="InterPro"/>
</dbReference>
<dbReference type="GO" id="GO:0000049">
    <property type="term" value="F:tRNA binding"/>
    <property type="evidence" value="ECO:0007669"/>
    <property type="project" value="UniProtKB-UniRule"/>
</dbReference>
<dbReference type="GO" id="GO:0006412">
    <property type="term" value="P:translation"/>
    <property type="evidence" value="ECO:0007669"/>
    <property type="project" value="UniProtKB-UniRule"/>
</dbReference>
<dbReference type="FunFam" id="3.30.70.600:FF:000001">
    <property type="entry name" value="30S ribosomal protein S10"/>
    <property type="match status" value="1"/>
</dbReference>
<dbReference type="Gene3D" id="3.30.70.600">
    <property type="entry name" value="Ribosomal protein S10 domain"/>
    <property type="match status" value="1"/>
</dbReference>
<dbReference type="HAMAP" id="MF_00508">
    <property type="entry name" value="Ribosomal_uS10"/>
    <property type="match status" value="1"/>
</dbReference>
<dbReference type="InterPro" id="IPR001848">
    <property type="entry name" value="Ribosomal_uS10"/>
</dbReference>
<dbReference type="InterPro" id="IPR018268">
    <property type="entry name" value="Ribosomal_uS10_CS"/>
</dbReference>
<dbReference type="InterPro" id="IPR027486">
    <property type="entry name" value="Ribosomal_uS10_dom"/>
</dbReference>
<dbReference type="InterPro" id="IPR036838">
    <property type="entry name" value="Ribosomal_uS10_dom_sf"/>
</dbReference>
<dbReference type="NCBIfam" id="NF001861">
    <property type="entry name" value="PRK00596.1"/>
    <property type="match status" value="1"/>
</dbReference>
<dbReference type="NCBIfam" id="TIGR01049">
    <property type="entry name" value="rpsJ_bact"/>
    <property type="match status" value="1"/>
</dbReference>
<dbReference type="PANTHER" id="PTHR11700">
    <property type="entry name" value="30S RIBOSOMAL PROTEIN S10 FAMILY MEMBER"/>
    <property type="match status" value="1"/>
</dbReference>
<dbReference type="Pfam" id="PF00338">
    <property type="entry name" value="Ribosomal_S10"/>
    <property type="match status" value="1"/>
</dbReference>
<dbReference type="PRINTS" id="PR00971">
    <property type="entry name" value="RIBOSOMALS10"/>
</dbReference>
<dbReference type="SMART" id="SM01403">
    <property type="entry name" value="Ribosomal_S10"/>
    <property type="match status" value="1"/>
</dbReference>
<dbReference type="SUPFAM" id="SSF54999">
    <property type="entry name" value="Ribosomal protein S10"/>
    <property type="match status" value="1"/>
</dbReference>
<dbReference type="PROSITE" id="PS00361">
    <property type="entry name" value="RIBOSOMAL_S10"/>
    <property type="match status" value="1"/>
</dbReference>
<proteinExistence type="inferred from homology"/>
<feature type="chain" id="PRO_1000196301" description="Small ribosomal subunit protein uS10">
    <location>
        <begin position="1"/>
        <end position="102"/>
    </location>
</feature>
<reference key="1">
    <citation type="submission" date="2005-09" db="EMBL/GenBank/DDBJ databases">
        <title>Complete genome sequence of Clostridium kluyveri and comparative genomics of Clostridia species.</title>
        <authorList>
            <person name="Inui M."/>
            <person name="Nonaka H."/>
            <person name="Shinoda Y."/>
            <person name="Ikenaga Y."/>
            <person name="Abe M."/>
            <person name="Naito K."/>
            <person name="Vertes A.A."/>
            <person name="Yukawa H."/>
        </authorList>
    </citation>
    <scope>NUCLEOTIDE SEQUENCE [LARGE SCALE GENOMIC DNA]</scope>
    <source>
        <strain>NBRC 12016</strain>
    </source>
</reference>
<organism>
    <name type="scientific">Clostridium kluyveri (strain NBRC 12016)</name>
    <dbReference type="NCBI Taxonomy" id="583346"/>
    <lineage>
        <taxon>Bacteria</taxon>
        <taxon>Bacillati</taxon>
        <taxon>Bacillota</taxon>
        <taxon>Clostridia</taxon>
        <taxon>Eubacteriales</taxon>
        <taxon>Clostridiaceae</taxon>
        <taxon>Clostridium</taxon>
    </lineage>
</organism>
<keyword id="KW-0687">Ribonucleoprotein</keyword>
<keyword id="KW-0689">Ribosomal protein</keyword>
<protein>
    <recommendedName>
        <fullName evidence="1">Small ribosomal subunit protein uS10</fullName>
    </recommendedName>
    <alternativeName>
        <fullName evidence="2">30S ribosomal protein S10</fullName>
    </alternativeName>
</protein>
<name>RS10_CLOK1</name>
<evidence type="ECO:0000255" key="1">
    <source>
        <dbReference type="HAMAP-Rule" id="MF_00508"/>
    </source>
</evidence>
<evidence type="ECO:0000305" key="2"/>
<gene>
    <name evidence="1" type="primary">rpsJ</name>
    <name type="ordered locus">CKR_0182</name>
</gene>
<comment type="function">
    <text evidence="1">Involved in the binding of tRNA to the ribosomes.</text>
</comment>
<comment type="subunit">
    <text evidence="1">Part of the 30S ribosomal subunit.</text>
</comment>
<comment type="similarity">
    <text evidence="1">Belongs to the universal ribosomal protein uS10 family.</text>
</comment>
<sequence length="102" mass="11467">MAKQKIRIRLKAFDHTILDQSSEKIVETAKSTGAKVAGPVPLPTEKDVVTILRAPHKYKDSREQFEIRTHKRLIDIISPSPKTVDALMRLDLPAGVDIEIKL</sequence>
<accession>B9DYA8</accession>